<evidence type="ECO:0000256" key="1">
    <source>
        <dbReference type="SAM" id="MobiDB-lite"/>
    </source>
</evidence>
<evidence type="ECO:0000269" key="2">
    <source>
    </source>
</evidence>
<evidence type="ECO:0000269" key="3">
    <source>
    </source>
</evidence>
<evidence type="ECO:0000305" key="4"/>
<evidence type="ECO:0007744" key="5">
    <source>
    </source>
</evidence>
<evidence type="ECO:0007744" key="6">
    <source>
    </source>
</evidence>
<evidence type="ECO:0007829" key="7">
    <source>
        <dbReference type="PDB" id="8CSS"/>
    </source>
</evidence>
<evidence type="ECO:0007829" key="8">
    <source>
        <dbReference type="PDB" id="8QRN"/>
    </source>
</evidence>
<protein>
    <recommendedName>
        <fullName>Small ribosomal subunit protein mS23</fullName>
    </recommendedName>
    <alternativeName>
        <fullName>28S ribosomal protein S23, mitochondrial</fullName>
        <shortName>MRP-S23</shortName>
        <shortName>S23mt</shortName>
    </alternativeName>
</protein>
<dbReference type="EMBL" id="AF151896">
    <property type="protein sequence ID" value="AAD34133.1"/>
    <property type="status" value="ALT_FRAME"/>
    <property type="molecule type" value="mRNA"/>
</dbReference>
<dbReference type="EMBL" id="AF161447">
    <property type="protein sequence ID" value="AAF29007.1"/>
    <property type="status" value="ALT_FRAME"/>
    <property type="molecule type" value="mRNA"/>
</dbReference>
<dbReference type="EMBL" id="AK312729">
    <property type="protein sequence ID" value="BAG35600.1"/>
    <property type="molecule type" value="mRNA"/>
</dbReference>
<dbReference type="EMBL" id="CH471109">
    <property type="protein sequence ID" value="EAW94503.1"/>
    <property type="molecule type" value="Genomic_DNA"/>
</dbReference>
<dbReference type="EMBL" id="BC000242">
    <property type="protein sequence ID" value="AAH00242.1"/>
    <property type="molecule type" value="mRNA"/>
</dbReference>
<dbReference type="EMBL" id="AB061206">
    <property type="protein sequence ID" value="BAB54956.1"/>
    <property type="molecule type" value="Genomic_DNA"/>
</dbReference>
<dbReference type="CCDS" id="CCDS11598.1"/>
<dbReference type="RefSeq" id="NP_057154.2">
    <property type="nucleotide sequence ID" value="NM_016070.3"/>
</dbReference>
<dbReference type="PDB" id="3J9M">
    <property type="method" value="EM"/>
    <property type="resolution" value="3.50 A"/>
    <property type="chains" value="AS=1-190"/>
</dbReference>
<dbReference type="PDB" id="6NU2">
    <property type="method" value="EM"/>
    <property type="resolution" value="3.90 A"/>
    <property type="chains" value="AS=2-127"/>
</dbReference>
<dbReference type="PDB" id="6NU3">
    <property type="method" value="EM"/>
    <property type="resolution" value="4.40 A"/>
    <property type="chains" value="AS=1-190"/>
</dbReference>
<dbReference type="PDB" id="6RW4">
    <property type="method" value="EM"/>
    <property type="resolution" value="2.97 A"/>
    <property type="chains" value="S=1-190"/>
</dbReference>
<dbReference type="PDB" id="6RW5">
    <property type="method" value="EM"/>
    <property type="resolution" value="3.14 A"/>
    <property type="chains" value="S=1-190"/>
</dbReference>
<dbReference type="PDB" id="6VLZ">
    <property type="method" value="EM"/>
    <property type="resolution" value="2.97 A"/>
    <property type="chains" value="AS=1-190"/>
</dbReference>
<dbReference type="PDB" id="6VMI">
    <property type="method" value="EM"/>
    <property type="resolution" value="2.96 A"/>
    <property type="chains" value="AS=1-190"/>
</dbReference>
<dbReference type="PDB" id="6ZM5">
    <property type="method" value="EM"/>
    <property type="resolution" value="2.89 A"/>
    <property type="chains" value="AS=1-190"/>
</dbReference>
<dbReference type="PDB" id="6ZM6">
    <property type="method" value="EM"/>
    <property type="resolution" value="2.59 A"/>
    <property type="chains" value="AS=1-190"/>
</dbReference>
<dbReference type="PDB" id="6ZS9">
    <property type="method" value="EM"/>
    <property type="resolution" value="4.00 A"/>
    <property type="chains" value="AS=1-190"/>
</dbReference>
<dbReference type="PDB" id="6ZSA">
    <property type="method" value="EM"/>
    <property type="resolution" value="4.00 A"/>
    <property type="chains" value="AS=1-190"/>
</dbReference>
<dbReference type="PDB" id="6ZSB">
    <property type="method" value="EM"/>
    <property type="resolution" value="4.50 A"/>
    <property type="chains" value="AS=1-190"/>
</dbReference>
<dbReference type="PDB" id="6ZSC">
    <property type="method" value="EM"/>
    <property type="resolution" value="3.50 A"/>
    <property type="chains" value="AS=1-190"/>
</dbReference>
<dbReference type="PDB" id="6ZSD">
    <property type="method" value="EM"/>
    <property type="resolution" value="3.70 A"/>
    <property type="chains" value="AS=1-190"/>
</dbReference>
<dbReference type="PDB" id="6ZSE">
    <property type="method" value="EM"/>
    <property type="resolution" value="5.00 A"/>
    <property type="chains" value="AS=1-190"/>
</dbReference>
<dbReference type="PDB" id="6ZSG">
    <property type="method" value="EM"/>
    <property type="resolution" value="4.00 A"/>
    <property type="chains" value="AS=1-190"/>
</dbReference>
<dbReference type="PDB" id="7A5F">
    <property type="method" value="EM"/>
    <property type="resolution" value="4.40 A"/>
    <property type="chains" value="S6=1-190"/>
</dbReference>
<dbReference type="PDB" id="7A5G">
    <property type="method" value="EM"/>
    <property type="resolution" value="4.33 A"/>
    <property type="chains" value="S6=1-190"/>
</dbReference>
<dbReference type="PDB" id="7A5I">
    <property type="method" value="EM"/>
    <property type="resolution" value="3.70 A"/>
    <property type="chains" value="S6=1-190"/>
</dbReference>
<dbReference type="PDB" id="7A5K">
    <property type="method" value="EM"/>
    <property type="resolution" value="3.70 A"/>
    <property type="chains" value="S6=1-190"/>
</dbReference>
<dbReference type="PDB" id="7L08">
    <property type="method" value="EM"/>
    <property type="resolution" value="3.49 A"/>
    <property type="chains" value="AS=1-190"/>
</dbReference>
<dbReference type="PDB" id="7OG4">
    <property type="method" value="EM"/>
    <property type="resolution" value="3.80 A"/>
    <property type="chains" value="AS=1-190"/>
</dbReference>
<dbReference type="PDB" id="7P2E">
    <property type="method" value="EM"/>
    <property type="resolution" value="2.40 A"/>
    <property type="chains" value="S=1-190"/>
</dbReference>
<dbReference type="PDB" id="7PNX">
    <property type="method" value="EM"/>
    <property type="resolution" value="2.76 A"/>
    <property type="chains" value="S=1-190"/>
</dbReference>
<dbReference type="PDB" id="7PNY">
    <property type="method" value="EM"/>
    <property type="resolution" value="3.06 A"/>
    <property type="chains" value="S=1-190"/>
</dbReference>
<dbReference type="PDB" id="7PNZ">
    <property type="method" value="EM"/>
    <property type="resolution" value="3.09 A"/>
    <property type="chains" value="S=1-190"/>
</dbReference>
<dbReference type="PDB" id="7PO0">
    <property type="method" value="EM"/>
    <property type="resolution" value="2.90 A"/>
    <property type="chains" value="S=1-190"/>
</dbReference>
<dbReference type="PDB" id="7PO1">
    <property type="method" value="EM"/>
    <property type="resolution" value="2.92 A"/>
    <property type="chains" value="S=1-190"/>
</dbReference>
<dbReference type="PDB" id="7PO2">
    <property type="method" value="EM"/>
    <property type="resolution" value="3.09 A"/>
    <property type="chains" value="S=1-190"/>
</dbReference>
<dbReference type="PDB" id="7PO3">
    <property type="method" value="EM"/>
    <property type="resolution" value="2.92 A"/>
    <property type="chains" value="S=1-190"/>
</dbReference>
<dbReference type="PDB" id="7QI4">
    <property type="method" value="EM"/>
    <property type="resolution" value="2.21 A"/>
    <property type="chains" value="AS=1-190"/>
</dbReference>
<dbReference type="PDB" id="7QI5">
    <property type="method" value="EM"/>
    <property type="resolution" value="2.63 A"/>
    <property type="chains" value="AS=1-190"/>
</dbReference>
<dbReference type="PDB" id="7QI6">
    <property type="method" value="EM"/>
    <property type="resolution" value="2.98 A"/>
    <property type="chains" value="AS=1-190"/>
</dbReference>
<dbReference type="PDB" id="8ANY">
    <property type="method" value="EM"/>
    <property type="resolution" value="2.85 A"/>
    <property type="chains" value="AS=1-190"/>
</dbReference>
<dbReference type="PDB" id="8CSP">
    <property type="method" value="EM"/>
    <property type="resolution" value="2.66 A"/>
    <property type="chains" value="S=1-190"/>
</dbReference>
<dbReference type="PDB" id="8CSQ">
    <property type="method" value="EM"/>
    <property type="resolution" value="2.54 A"/>
    <property type="chains" value="S=1-190"/>
</dbReference>
<dbReference type="PDB" id="8CSR">
    <property type="method" value="EM"/>
    <property type="resolution" value="2.54 A"/>
    <property type="chains" value="S=1-190"/>
</dbReference>
<dbReference type="PDB" id="8CSS">
    <property type="method" value="EM"/>
    <property type="resolution" value="2.36 A"/>
    <property type="chains" value="S=1-190"/>
</dbReference>
<dbReference type="PDB" id="8CST">
    <property type="method" value="EM"/>
    <property type="resolution" value="2.85 A"/>
    <property type="chains" value="S=1-190"/>
</dbReference>
<dbReference type="PDB" id="8CSU">
    <property type="method" value="EM"/>
    <property type="resolution" value="3.03 A"/>
    <property type="chains" value="S=1-190"/>
</dbReference>
<dbReference type="PDB" id="8K2A">
    <property type="method" value="EM"/>
    <property type="resolution" value="2.90 A"/>
    <property type="chains" value="SY=1-190"/>
</dbReference>
<dbReference type="PDB" id="8OIR">
    <property type="method" value="EM"/>
    <property type="resolution" value="3.10 A"/>
    <property type="chains" value="AS=1-190"/>
</dbReference>
<dbReference type="PDB" id="8OIS">
    <property type="method" value="EM"/>
    <property type="resolution" value="3.00 A"/>
    <property type="chains" value="AS=1-190"/>
</dbReference>
<dbReference type="PDB" id="8QRK">
    <property type="method" value="EM"/>
    <property type="resolution" value="6.69 A"/>
    <property type="chains" value="S=1-190"/>
</dbReference>
<dbReference type="PDB" id="8QRL">
    <property type="method" value="EM"/>
    <property type="resolution" value="3.34 A"/>
    <property type="chains" value="S=1-190"/>
</dbReference>
<dbReference type="PDB" id="8QRM">
    <property type="method" value="EM"/>
    <property type="resolution" value="3.05 A"/>
    <property type="chains" value="S=1-190"/>
</dbReference>
<dbReference type="PDB" id="8QRN">
    <property type="method" value="EM"/>
    <property type="resolution" value="2.98 A"/>
    <property type="chains" value="S=1-190"/>
</dbReference>
<dbReference type="PDB" id="8RRI">
    <property type="method" value="EM"/>
    <property type="resolution" value="2.40 A"/>
    <property type="chains" value="AS=1-190"/>
</dbReference>
<dbReference type="PDB" id="8XT0">
    <property type="method" value="EM"/>
    <property type="resolution" value="3.20 A"/>
    <property type="chains" value="SY=1-190"/>
</dbReference>
<dbReference type="PDB" id="8XT2">
    <property type="method" value="EM"/>
    <property type="resolution" value="3.30 A"/>
    <property type="chains" value="SY=1-190"/>
</dbReference>
<dbReference type="PDBsum" id="3J9M"/>
<dbReference type="PDBsum" id="6NU2"/>
<dbReference type="PDBsum" id="6NU3"/>
<dbReference type="PDBsum" id="6RW4"/>
<dbReference type="PDBsum" id="6RW5"/>
<dbReference type="PDBsum" id="6VLZ"/>
<dbReference type="PDBsum" id="6VMI"/>
<dbReference type="PDBsum" id="6ZM5"/>
<dbReference type="PDBsum" id="6ZM6"/>
<dbReference type="PDBsum" id="6ZS9"/>
<dbReference type="PDBsum" id="6ZSA"/>
<dbReference type="PDBsum" id="6ZSB"/>
<dbReference type="PDBsum" id="6ZSC"/>
<dbReference type="PDBsum" id="6ZSD"/>
<dbReference type="PDBsum" id="6ZSE"/>
<dbReference type="PDBsum" id="6ZSG"/>
<dbReference type="PDBsum" id="7A5F"/>
<dbReference type="PDBsum" id="7A5G"/>
<dbReference type="PDBsum" id="7A5I"/>
<dbReference type="PDBsum" id="7A5K"/>
<dbReference type="PDBsum" id="7L08"/>
<dbReference type="PDBsum" id="7OG4"/>
<dbReference type="PDBsum" id="7P2E"/>
<dbReference type="PDBsum" id="7PNX"/>
<dbReference type="PDBsum" id="7PNY"/>
<dbReference type="PDBsum" id="7PNZ"/>
<dbReference type="PDBsum" id="7PO0"/>
<dbReference type="PDBsum" id="7PO1"/>
<dbReference type="PDBsum" id="7PO2"/>
<dbReference type="PDBsum" id="7PO3"/>
<dbReference type="PDBsum" id="7QI4"/>
<dbReference type="PDBsum" id="7QI5"/>
<dbReference type="PDBsum" id="7QI6"/>
<dbReference type="PDBsum" id="8ANY"/>
<dbReference type="PDBsum" id="8CSP"/>
<dbReference type="PDBsum" id="8CSQ"/>
<dbReference type="PDBsum" id="8CSR"/>
<dbReference type="PDBsum" id="8CSS"/>
<dbReference type="PDBsum" id="8CST"/>
<dbReference type="PDBsum" id="8CSU"/>
<dbReference type="PDBsum" id="8K2A"/>
<dbReference type="PDBsum" id="8OIR"/>
<dbReference type="PDBsum" id="8OIS"/>
<dbReference type="PDBsum" id="8QRK"/>
<dbReference type="PDBsum" id="8QRL"/>
<dbReference type="PDBsum" id="8QRM"/>
<dbReference type="PDBsum" id="8QRN"/>
<dbReference type="PDBsum" id="8RRI"/>
<dbReference type="PDBsum" id="8XT0"/>
<dbReference type="PDBsum" id="8XT2"/>
<dbReference type="EMDB" id="EMD-0514"/>
<dbReference type="EMDB" id="EMD-0515"/>
<dbReference type="EMDB" id="EMD-10021"/>
<dbReference type="EMDB" id="EMD-10022"/>
<dbReference type="EMDB" id="EMD-11278"/>
<dbReference type="EMDB" id="EMD-11279"/>
<dbReference type="EMDB" id="EMD-11390"/>
<dbReference type="EMDB" id="EMD-11391"/>
<dbReference type="EMDB" id="EMD-11392"/>
<dbReference type="EMDB" id="EMD-11393"/>
<dbReference type="EMDB" id="EMD-11394"/>
<dbReference type="EMDB" id="EMD-11395"/>
<dbReference type="EMDB" id="EMD-11397"/>
<dbReference type="EMDB" id="EMD-11641"/>
<dbReference type="EMDB" id="EMD-11642"/>
<dbReference type="EMDB" id="EMD-11644"/>
<dbReference type="EMDB" id="EMD-11646"/>
<dbReference type="EMDB" id="EMD-12877"/>
<dbReference type="EMDB" id="EMD-13170"/>
<dbReference type="EMDB" id="EMD-13555"/>
<dbReference type="EMDB" id="EMD-13556"/>
<dbReference type="EMDB" id="EMD-13557"/>
<dbReference type="EMDB" id="EMD-13558"/>
<dbReference type="EMDB" id="EMD-13559"/>
<dbReference type="EMDB" id="EMD-13560"/>
<dbReference type="EMDB" id="EMD-13561"/>
<dbReference type="EMDB" id="EMD-13980"/>
<dbReference type="EMDB" id="EMD-13981"/>
<dbReference type="EMDB" id="EMD-13982"/>
<dbReference type="EMDB" id="EMD-15544"/>
<dbReference type="EMDB" id="EMD-16897"/>
<dbReference type="EMDB" id="EMD-16898"/>
<dbReference type="EMDB" id="EMD-19460"/>
<dbReference type="EMDB" id="EMD-21233"/>
<dbReference type="EMDB" id="EMD-21242"/>
<dbReference type="EMDB" id="EMD-23096"/>
<dbReference type="EMDB" id="EMD-26966"/>
<dbReference type="EMDB" id="EMD-26967"/>
<dbReference type="EMDB" id="EMD-26968"/>
<dbReference type="EMDB" id="EMD-26969"/>
<dbReference type="EMDB" id="EMD-26970"/>
<dbReference type="EMDB" id="EMD-26971"/>
<dbReference type="EMDB" id="EMD-36836"/>
<dbReference type="EMDB" id="EMD-38632"/>
<dbReference type="EMDB" id="EMD-38634"/>
<dbReference type="SMR" id="Q9Y3D9"/>
<dbReference type="BioGRID" id="119657">
    <property type="interactions" value="307"/>
</dbReference>
<dbReference type="ComplexPortal" id="CPX-5225">
    <property type="entry name" value="28S mitochondrial small ribosomal subunit"/>
</dbReference>
<dbReference type="CORUM" id="Q9Y3D9"/>
<dbReference type="FunCoup" id="Q9Y3D9">
    <property type="interactions" value="1635"/>
</dbReference>
<dbReference type="IntAct" id="Q9Y3D9">
    <property type="interactions" value="160"/>
</dbReference>
<dbReference type="MINT" id="Q9Y3D9"/>
<dbReference type="STRING" id="9606.ENSP00000320184"/>
<dbReference type="ChEMBL" id="CHEMBL4295990"/>
<dbReference type="GlyGen" id="Q9Y3D9">
    <property type="glycosylation" value="1 site, 1 O-linked glycan (1 site)"/>
</dbReference>
<dbReference type="iPTMnet" id="Q9Y3D9"/>
<dbReference type="PhosphoSitePlus" id="Q9Y3D9"/>
<dbReference type="SwissPalm" id="Q9Y3D9"/>
<dbReference type="BioMuta" id="MRPS23"/>
<dbReference type="DMDM" id="31077184"/>
<dbReference type="jPOST" id="Q9Y3D9"/>
<dbReference type="MassIVE" id="Q9Y3D9"/>
<dbReference type="PaxDb" id="9606-ENSP00000320184"/>
<dbReference type="PeptideAtlas" id="Q9Y3D9"/>
<dbReference type="ProteomicsDB" id="86026"/>
<dbReference type="Pumba" id="Q9Y3D9"/>
<dbReference type="TopDownProteomics" id="Q9Y3D9"/>
<dbReference type="Antibodypedia" id="18338">
    <property type="antibodies" value="126 antibodies from 20 providers"/>
</dbReference>
<dbReference type="DNASU" id="51649"/>
<dbReference type="Ensembl" id="ENST00000313608.13">
    <property type="protein sequence ID" value="ENSP00000320184.8"/>
    <property type="gene ID" value="ENSG00000181610.13"/>
</dbReference>
<dbReference type="GeneID" id="51649"/>
<dbReference type="KEGG" id="hsa:51649"/>
<dbReference type="MANE-Select" id="ENST00000313608.13">
    <property type="protein sequence ID" value="ENSP00000320184.8"/>
    <property type="RefSeq nucleotide sequence ID" value="NM_016070.4"/>
    <property type="RefSeq protein sequence ID" value="NP_057154.2"/>
</dbReference>
<dbReference type="UCSC" id="uc002ivc.4">
    <property type="organism name" value="human"/>
</dbReference>
<dbReference type="AGR" id="HGNC:14509"/>
<dbReference type="CTD" id="51649"/>
<dbReference type="DisGeNET" id="51649"/>
<dbReference type="GeneCards" id="MRPS23"/>
<dbReference type="HGNC" id="HGNC:14509">
    <property type="gene designation" value="MRPS23"/>
</dbReference>
<dbReference type="HPA" id="ENSG00000181610">
    <property type="expression patterns" value="Low tissue specificity"/>
</dbReference>
<dbReference type="MalaCards" id="MRPS23"/>
<dbReference type="MIM" id="611985">
    <property type="type" value="gene"/>
</dbReference>
<dbReference type="MIM" id="618952">
    <property type="type" value="phenotype"/>
</dbReference>
<dbReference type="neXtProt" id="NX_Q9Y3D9"/>
<dbReference type="OpenTargets" id="ENSG00000181610"/>
<dbReference type="PharmGKB" id="PA31011"/>
<dbReference type="VEuPathDB" id="HostDB:ENSG00000181610"/>
<dbReference type="eggNOG" id="ENOG502RZIC">
    <property type="taxonomic scope" value="Eukaryota"/>
</dbReference>
<dbReference type="GeneTree" id="ENSGT00390000009030"/>
<dbReference type="InParanoid" id="Q9Y3D9"/>
<dbReference type="OMA" id="TEDKPIW"/>
<dbReference type="OrthoDB" id="10012356at2759"/>
<dbReference type="PAN-GO" id="Q9Y3D9">
    <property type="GO annotations" value="1 GO annotation based on evolutionary models"/>
</dbReference>
<dbReference type="PhylomeDB" id="Q9Y3D9"/>
<dbReference type="TreeFam" id="TF106116"/>
<dbReference type="PathwayCommons" id="Q9Y3D9"/>
<dbReference type="Reactome" id="R-HSA-5368286">
    <property type="pathway name" value="Mitochondrial translation initiation"/>
</dbReference>
<dbReference type="Reactome" id="R-HSA-5389840">
    <property type="pathway name" value="Mitochondrial translation elongation"/>
</dbReference>
<dbReference type="Reactome" id="R-HSA-5419276">
    <property type="pathway name" value="Mitochondrial translation termination"/>
</dbReference>
<dbReference type="SignaLink" id="Q9Y3D9"/>
<dbReference type="SIGNOR" id="Q9Y3D9"/>
<dbReference type="BioGRID-ORCS" id="51649">
    <property type="hits" value="491 hits in 1169 CRISPR screens"/>
</dbReference>
<dbReference type="ChiTaRS" id="MRPS23">
    <property type="organism name" value="human"/>
</dbReference>
<dbReference type="GenomeRNAi" id="51649"/>
<dbReference type="Pharos" id="Q9Y3D9">
    <property type="development level" value="Tbio"/>
</dbReference>
<dbReference type="PRO" id="PR:Q9Y3D9"/>
<dbReference type="Proteomes" id="UP000005640">
    <property type="component" value="Chromosome 17"/>
</dbReference>
<dbReference type="RNAct" id="Q9Y3D9">
    <property type="molecule type" value="protein"/>
</dbReference>
<dbReference type="Bgee" id="ENSG00000181610">
    <property type="expression patterns" value="Expressed in left ventricle myocardium and 187 other cell types or tissues"/>
</dbReference>
<dbReference type="ExpressionAtlas" id="Q9Y3D9">
    <property type="expression patterns" value="baseline and differential"/>
</dbReference>
<dbReference type="GO" id="GO:0005743">
    <property type="term" value="C:mitochondrial inner membrane"/>
    <property type="evidence" value="ECO:0000304"/>
    <property type="project" value="Reactome"/>
</dbReference>
<dbReference type="GO" id="GO:0005763">
    <property type="term" value="C:mitochondrial small ribosomal subunit"/>
    <property type="evidence" value="ECO:0000303"/>
    <property type="project" value="ComplexPortal"/>
</dbReference>
<dbReference type="GO" id="GO:0005739">
    <property type="term" value="C:mitochondrion"/>
    <property type="evidence" value="ECO:0000314"/>
    <property type="project" value="HPA"/>
</dbReference>
<dbReference type="GO" id="GO:0031965">
    <property type="term" value="C:nuclear membrane"/>
    <property type="evidence" value="ECO:0000314"/>
    <property type="project" value="HPA"/>
</dbReference>
<dbReference type="GO" id="GO:0003723">
    <property type="term" value="F:RNA binding"/>
    <property type="evidence" value="ECO:0007005"/>
    <property type="project" value="UniProtKB"/>
</dbReference>
<dbReference type="GO" id="GO:0003735">
    <property type="term" value="F:structural constituent of ribosome"/>
    <property type="evidence" value="ECO:0007669"/>
    <property type="project" value="InterPro"/>
</dbReference>
<dbReference type="GO" id="GO:0032543">
    <property type="term" value="P:mitochondrial translation"/>
    <property type="evidence" value="ECO:0000303"/>
    <property type="project" value="ComplexPortal"/>
</dbReference>
<dbReference type="CDD" id="cd23701">
    <property type="entry name" value="At1g26750"/>
    <property type="match status" value="1"/>
</dbReference>
<dbReference type="InterPro" id="IPR023611">
    <property type="entry name" value="Ribosomal_mS23_dom"/>
</dbReference>
<dbReference type="InterPro" id="IPR019520">
    <property type="entry name" value="Ribosomal_mS23_met"/>
</dbReference>
<dbReference type="PANTHER" id="PTHR15925">
    <property type="entry name" value="MITOCHONDRIAL RIBOSOMAL PROTEIN S23"/>
    <property type="match status" value="1"/>
</dbReference>
<dbReference type="PANTHER" id="PTHR15925:SF2">
    <property type="entry name" value="SMALL RIBOSOMAL SUBUNIT PROTEIN MS23"/>
    <property type="match status" value="1"/>
</dbReference>
<dbReference type="Pfam" id="PF10484">
    <property type="entry name" value="MRP-S23"/>
    <property type="match status" value="1"/>
</dbReference>
<accession>Q9Y3D9</accession>
<accession>B2R6V3</accession>
<accession>Q96Q24</accession>
<accession>Q9BWH8</accession>
<accession>Q9P053</accession>
<comment type="subunit">
    <text evidence="2">Component of the mitochondrial small ribosomal subunit (mt-SSU). Mature mammalian 55S mitochondrial ribosomes consist of a small (28S) and a large (39S) subunit. The 28S small subunit contains a 12S ribosomal RNA (12S mt-rRNA) and 30 different proteins. The 39S large subunit contains a 16S rRNA (16S mt-rRNA), a copy of mitochondrial valine transfer RNA (mt-tRNA(Val)), which plays an integral structural role, and 52 different proteins.</text>
</comment>
<comment type="interaction">
    <interactant intactId="EBI-1054270">
        <id>Q9Y3D9</id>
    </interactant>
    <interactant intactId="EBI-19954058">
        <id>O15499</id>
        <label>GSC2</label>
    </interactant>
    <organismsDiffer>false</organismsDiffer>
    <experiments>3</experiments>
</comment>
<comment type="interaction">
    <interactant intactId="EBI-1054270">
        <id>Q9Y3D9</id>
    </interactant>
    <interactant intactId="EBI-1055079">
        <id>O15160</id>
        <label>POLR1C</label>
    </interactant>
    <organismsDiffer>false</organismsDiffer>
    <experiments>3</experiments>
</comment>
<comment type="interaction">
    <interactant intactId="EBI-1054270">
        <id>Q9Y3D9</id>
    </interactant>
    <interactant intactId="EBI-739895">
        <id>Q8N6Y0</id>
        <label>USHBP1</label>
    </interactant>
    <organismsDiffer>false</organismsDiffer>
    <experiments>3</experiments>
</comment>
<comment type="subcellular location">
    <subcellularLocation>
        <location evidence="2">Mitochondrion</location>
    </subcellularLocation>
</comment>
<comment type="disease" evidence="3">
    <disease id="DI-05878">
        <name>Combined oxidative phosphorylation deficiency 46</name>
        <acronym>COXPD46</acronym>
        <description>An autosomal recessive disorder characterized by childhood-onset mitochondrial respiratory chain complex deficiencies, particularly complexes I and IV, and hepatic disease.</description>
        <dbReference type="MIM" id="618952"/>
    </disease>
    <text>The disease may be caused by variants affecting the gene represented in this entry.</text>
</comment>
<comment type="similarity">
    <text evidence="4">Belongs to the mitochondrion-specific ribosomal protein mS23 family.</text>
</comment>
<comment type="sequence caution" evidence="4">
    <conflict type="frameshift">
        <sequence resource="EMBL-CDS" id="AAD34133"/>
    </conflict>
</comment>
<comment type="sequence caution" evidence="4">
    <conflict type="frameshift">
        <sequence resource="EMBL-CDS" id="AAF29007"/>
    </conflict>
</comment>
<sequence length="190" mass="21771">MAGSRLETVGSIFSRTRDLVRAGVLKEKPLWFDVYDAFPPLREPVFQRPRVRYGKAKAPIQDIWYHEDRIRAKFYSVYGSGQRAFDLFNPNFKSTCQRFVEKYTELQKLGETDEEKLFVETGKALLAEGVILRRVGEARTQHGGSHVSRKSEHLSVRPQTALEENETQKEVPQDQHLEAPADQSKGLLPP</sequence>
<name>RT23_HUMAN</name>
<reference key="1">
    <citation type="journal article" date="2000" name="Genome Res.">
        <title>Identification of novel human genes evolutionarily conserved in Caenorhabditis elegans by comparative proteomics.</title>
        <authorList>
            <person name="Lai C.-H."/>
            <person name="Chou C.-Y."/>
            <person name="Ch'ang L.-Y."/>
            <person name="Liu C.-S."/>
            <person name="Lin W.-C."/>
        </authorList>
    </citation>
    <scope>NUCLEOTIDE SEQUENCE [LARGE SCALE MRNA]</scope>
</reference>
<reference key="2">
    <citation type="submission" date="1999-05" db="EMBL/GenBank/DDBJ databases">
        <title>Human partial CDS from CD34+ stem cells.</title>
        <authorList>
            <person name="Ye M."/>
            <person name="Zhang Q.-H."/>
            <person name="Zhou J."/>
            <person name="Shen Y."/>
            <person name="Wu X.-Y."/>
            <person name="Guan Z.Q."/>
            <person name="Wang L."/>
            <person name="Fan H.-Y."/>
            <person name="Mao Y.-F."/>
            <person name="Dai M."/>
            <person name="Huang Q.-H."/>
            <person name="Chen S.-J."/>
            <person name="Chen Z."/>
        </authorList>
    </citation>
    <scope>NUCLEOTIDE SEQUENCE [LARGE SCALE MRNA]</scope>
    <source>
        <tissue>Umbilical cord blood</tissue>
    </source>
</reference>
<reference key="3">
    <citation type="journal article" date="2004" name="Nat. Genet.">
        <title>Complete sequencing and characterization of 21,243 full-length human cDNAs.</title>
        <authorList>
            <person name="Ota T."/>
            <person name="Suzuki Y."/>
            <person name="Nishikawa T."/>
            <person name="Otsuki T."/>
            <person name="Sugiyama T."/>
            <person name="Irie R."/>
            <person name="Wakamatsu A."/>
            <person name="Hayashi K."/>
            <person name="Sato H."/>
            <person name="Nagai K."/>
            <person name="Kimura K."/>
            <person name="Makita H."/>
            <person name="Sekine M."/>
            <person name="Obayashi M."/>
            <person name="Nishi T."/>
            <person name="Shibahara T."/>
            <person name="Tanaka T."/>
            <person name="Ishii S."/>
            <person name="Yamamoto J."/>
            <person name="Saito K."/>
            <person name="Kawai Y."/>
            <person name="Isono Y."/>
            <person name="Nakamura Y."/>
            <person name="Nagahari K."/>
            <person name="Murakami K."/>
            <person name="Yasuda T."/>
            <person name="Iwayanagi T."/>
            <person name="Wagatsuma M."/>
            <person name="Shiratori A."/>
            <person name="Sudo H."/>
            <person name="Hosoiri T."/>
            <person name="Kaku Y."/>
            <person name="Kodaira H."/>
            <person name="Kondo H."/>
            <person name="Sugawara M."/>
            <person name="Takahashi M."/>
            <person name="Kanda K."/>
            <person name="Yokoi T."/>
            <person name="Furuya T."/>
            <person name="Kikkawa E."/>
            <person name="Omura Y."/>
            <person name="Abe K."/>
            <person name="Kamihara K."/>
            <person name="Katsuta N."/>
            <person name="Sato K."/>
            <person name="Tanikawa M."/>
            <person name="Yamazaki M."/>
            <person name="Ninomiya K."/>
            <person name="Ishibashi T."/>
            <person name="Yamashita H."/>
            <person name="Murakawa K."/>
            <person name="Fujimori K."/>
            <person name="Tanai H."/>
            <person name="Kimata M."/>
            <person name="Watanabe M."/>
            <person name="Hiraoka S."/>
            <person name="Chiba Y."/>
            <person name="Ishida S."/>
            <person name="Ono Y."/>
            <person name="Takiguchi S."/>
            <person name="Watanabe S."/>
            <person name="Yosida M."/>
            <person name="Hotuta T."/>
            <person name="Kusano J."/>
            <person name="Kanehori K."/>
            <person name="Takahashi-Fujii A."/>
            <person name="Hara H."/>
            <person name="Tanase T.-O."/>
            <person name="Nomura Y."/>
            <person name="Togiya S."/>
            <person name="Komai F."/>
            <person name="Hara R."/>
            <person name="Takeuchi K."/>
            <person name="Arita M."/>
            <person name="Imose N."/>
            <person name="Musashino K."/>
            <person name="Yuuki H."/>
            <person name="Oshima A."/>
            <person name="Sasaki N."/>
            <person name="Aotsuka S."/>
            <person name="Yoshikawa Y."/>
            <person name="Matsunawa H."/>
            <person name="Ichihara T."/>
            <person name="Shiohata N."/>
            <person name="Sano S."/>
            <person name="Moriya S."/>
            <person name="Momiyama H."/>
            <person name="Satoh N."/>
            <person name="Takami S."/>
            <person name="Terashima Y."/>
            <person name="Suzuki O."/>
            <person name="Nakagawa S."/>
            <person name="Senoh A."/>
            <person name="Mizoguchi H."/>
            <person name="Goto Y."/>
            <person name="Shimizu F."/>
            <person name="Wakebe H."/>
            <person name="Hishigaki H."/>
            <person name="Watanabe T."/>
            <person name="Sugiyama A."/>
            <person name="Takemoto M."/>
            <person name="Kawakami B."/>
            <person name="Yamazaki M."/>
            <person name="Watanabe K."/>
            <person name="Kumagai A."/>
            <person name="Itakura S."/>
            <person name="Fukuzumi Y."/>
            <person name="Fujimori Y."/>
            <person name="Komiyama M."/>
            <person name="Tashiro H."/>
            <person name="Tanigami A."/>
            <person name="Fujiwara T."/>
            <person name="Ono T."/>
            <person name="Yamada K."/>
            <person name="Fujii Y."/>
            <person name="Ozaki K."/>
            <person name="Hirao M."/>
            <person name="Ohmori Y."/>
            <person name="Kawabata A."/>
            <person name="Hikiji T."/>
            <person name="Kobatake N."/>
            <person name="Inagaki H."/>
            <person name="Ikema Y."/>
            <person name="Okamoto S."/>
            <person name="Okitani R."/>
            <person name="Kawakami T."/>
            <person name="Noguchi S."/>
            <person name="Itoh T."/>
            <person name="Shigeta K."/>
            <person name="Senba T."/>
            <person name="Matsumura K."/>
            <person name="Nakajima Y."/>
            <person name="Mizuno T."/>
            <person name="Morinaga M."/>
            <person name="Sasaki M."/>
            <person name="Togashi T."/>
            <person name="Oyama M."/>
            <person name="Hata H."/>
            <person name="Watanabe M."/>
            <person name="Komatsu T."/>
            <person name="Mizushima-Sugano J."/>
            <person name="Satoh T."/>
            <person name="Shirai Y."/>
            <person name="Takahashi Y."/>
            <person name="Nakagawa K."/>
            <person name="Okumura K."/>
            <person name="Nagase T."/>
            <person name="Nomura N."/>
            <person name="Kikuchi H."/>
            <person name="Masuho Y."/>
            <person name="Yamashita R."/>
            <person name="Nakai K."/>
            <person name="Yada T."/>
            <person name="Nakamura Y."/>
            <person name="Ohara O."/>
            <person name="Isogai T."/>
            <person name="Sugano S."/>
        </authorList>
    </citation>
    <scope>NUCLEOTIDE SEQUENCE [LARGE SCALE MRNA]</scope>
</reference>
<reference key="4">
    <citation type="submission" date="2005-09" db="EMBL/GenBank/DDBJ databases">
        <authorList>
            <person name="Mural R.J."/>
            <person name="Istrail S."/>
            <person name="Sutton G.G."/>
            <person name="Florea L."/>
            <person name="Halpern A.L."/>
            <person name="Mobarry C.M."/>
            <person name="Lippert R."/>
            <person name="Walenz B."/>
            <person name="Shatkay H."/>
            <person name="Dew I."/>
            <person name="Miller J.R."/>
            <person name="Flanigan M.J."/>
            <person name="Edwards N.J."/>
            <person name="Bolanos R."/>
            <person name="Fasulo D."/>
            <person name="Halldorsson B.V."/>
            <person name="Hannenhalli S."/>
            <person name="Turner R."/>
            <person name="Yooseph S."/>
            <person name="Lu F."/>
            <person name="Nusskern D.R."/>
            <person name="Shue B.C."/>
            <person name="Zheng X.H."/>
            <person name="Zhong F."/>
            <person name="Delcher A.L."/>
            <person name="Huson D.H."/>
            <person name="Kravitz S.A."/>
            <person name="Mouchard L."/>
            <person name="Reinert K."/>
            <person name="Remington K.A."/>
            <person name="Clark A.G."/>
            <person name="Waterman M.S."/>
            <person name="Eichler E.E."/>
            <person name="Adams M.D."/>
            <person name="Hunkapiller M.W."/>
            <person name="Myers E.W."/>
            <person name="Venter J.C."/>
        </authorList>
    </citation>
    <scope>NUCLEOTIDE SEQUENCE [LARGE SCALE GENOMIC DNA]</scope>
</reference>
<reference key="5">
    <citation type="journal article" date="2004" name="Genome Res.">
        <title>The status, quality, and expansion of the NIH full-length cDNA project: the Mammalian Gene Collection (MGC).</title>
        <authorList>
            <consortium name="The MGC Project Team"/>
        </authorList>
    </citation>
    <scope>NUCLEOTIDE SEQUENCE [LARGE SCALE MRNA]</scope>
    <source>
        <tissue>Eye</tissue>
    </source>
</reference>
<reference key="6">
    <citation type="journal article" date="2001" name="Genomics">
        <title>The human mitochondrial ribosomal protein genes: mapping of 54 genes to the chromosomes and implications for human disorders.</title>
        <authorList>
            <person name="Kenmochi N."/>
            <person name="Suzuki T."/>
            <person name="Uechi T."/>
            <person name="Magoori M."/>
            <person name="Kuniba M."/>
            <person name="Higa S."/>
            <person name="Watanabe K."/>
            <person name="Tanaka T."/>
        </authorList>
    </citation>
    <scope>NUCLEOTIDE SEQUENCE [GENOMIC DNA] OF 77-98</scope>
</reference>
<reference key="7">
    <citation type="journal article" date="2000" name="J. Biol. Chem.">
        <title>A proteomics approach to the identification of mammalian mitochondrial small subunit ribosomal proteins.</title>
        <authorList>
            <person name="Koc E.C."/>
            <person name="Burkhart W."/>
            <person name="Blackburn K."/>
            <person name="Moseley A."/>
            <person name="Koc H."/>
            <person name="Spremulli L.L."/>
        </authorList>
    </citation>
    <scope>IDENTIFICATION</scope>
</reference>
<reference key="8">
    <citation type="journal article" date="2009" name="Science">
        <title>Lysine acetylation targets protein complexes and co-regulates major cellular functions.</title>
        <authorList>
            <person name="Choudhary C."/>
            <person name="Kumar C."/>
            <person name="Gnad F."/>
            <person name="Nielsen M.L."/>
            <person name="Rehman M."/>
            <person name="Walther T.C."/>
            <person name="Olsen J.V."/>
            <person name="Mann M."/>
        </authorList>
    </citation>
    <scope>ACETYLATION [LARGE SCALE ANALYSIS] AT LYS-102</scope>
    <scope>IDENTIFICATION BY MASS SPECTROMETRY [LARGE SCALE ANALYSIS]</scope>
</reference>
<reference key="9">
    <citation type="journal article" date="2011" name="BMC Syst. Biol.">
        <title>Initial characterization of the human central proteome.</title>
        <authorList>
            <person name="Burkard T.R."/>
            <person name="Planyavsky M."/>
            <person name="Kaupe I."/>
            <person name="Breitwieser F.P."/>
            <person name="Buerckstuemmer T."/>
            <person name="Bennett K.L."/>
            <person name="Superti-Furga G."/>
            <person name="Colinge J."/>
        </authorList>
    </citation>
    <scope>IDENTIFICATION BY MASS SPECTROMETRY [LARGE SCALE ANALYSIS]</scope>
</reference>
<reference key="10">
    <citation type="journal article" date="2015" name="Proteomics">
        <title>N-terminome analysis of the human mitochondrial proteome.</title>
        <authorList>
            <person name="Vaca Jacome A.S."/>
            <person name="Rabilloud T."/>
            <person name="Schaeffer-Reiss C."/>
            <person name="Rompais M."/>
            <person name="Ayoub D."/>
            <person name="Lane L."/>
            <person name="Bairoch A."/>
            <person name="Van Dorsselaer A."/>
            <person name="Carapito C."/>
        </authorList>
    </citation>
    <scope>ACETYLATION [LARGE SCALE ANALYSIS] AT ALA-2</scope>
    <scope>CLEAVAGE OF INITIATOR METHIONINE [LARGE SCALE ANALYSIS]</scope>
    <scope>IDENTIFICATION BY MASS SPECTROMETRY [LARGE SCALE ANALYSIS]</scope>
</reference>
<reference key="11">
    <citation type="journal article" date="2015" name="Science">
        <title>Ribosome. The structure of the human mitochondrial ribosome.</title>
        <authorList>
            <person name="Amunts A."/>
            <person name="Brown A."/>
            <person name="Toots J."/>
            <person name="Scheres S.H."/>
            <person name="Ramakrishnan V."/>
        </authorList>
    </citation>
    <scope>STRUCTURE BY ELECTRON MICROSCOPY (3.50 ANGSTROMS)</scope>
    <scope>SUBUNIT</scope>
    <scope>SUBCELLULAR LOCATION</scope>
</reference>
<reference key="12">
    <citation type="journal article" date="2016" name="PLoS Genet.">
        <title>A comprehensive genomic analysis reveals the genetic landscape of mitochondrial respiratory chain complex deficiencies.</title>
        <authorList>
            <person name="Kohda M."/>
            <person name="Tokuzawa Y."/>
            <person name="Kishita Y."/>
            <person name="Nyuzuki H."/>
            <person name="Moriyama Y."/>
            <person name="Mizuno Y."/>
            <person name="Hirata T."/>
            <person name="Yatsuka Y."/>
            <person name="Yamashita-Sugahara Y."/>
            <person name="Nakachi Y."/>
            <person name="Kato H."/>
            <person name="Okuda A."/>
            <person name="Tamaru S."/>
            <person name="Borna N.N."/>
            <person name="Banshoya K."/>
            <person name="Aigaki T."/>
            <person name="Sato-Miyata Y."/>
            <person name="Ohnuma K."/>
            <person name="Suzuki T."/>
            <person name="Nagao A."/>
            <person name="Maehata H."/>
            <person name="Matsuda F."/>
            <person name="Higasa K."/>
            <person name="Nagasaki M."/>
            <person name="Yasuda J."/>
            <person name="Yamamoto M."/>
            <person name="Fushimi T."/>
            <person name="Shimura M."/>
            <person name="Kaiho-Ichimoto K."/>
            <person name="Harashima H."/>
            <person name="Yamazaki T."/>
            <person name="Mori M."/>
            <person name="Murayama K."/>
            <person name="Ohtake A."/>
            <person name="Okazaki Y."/>
        </authorList>
    </citation>
    <scope>INVOLVEMENT IN COXPD46</scope>
    <scope>VARIANT COXPD46 ARG-40</scope>
</reference>
<keyword id="KW-0002">3D-structure</keyword>
<keyword id="KW-0007">Acetylation</keyword>
<keyword id="KW-0225">Disease variant</keyword>
<keyword id="KW-0496">Mitochondrion</keyword>
<keyword id="KW-1274">Primary mitochondrial disease</keyword>
<keyword id="KW-1267">Proteomics identification</keyword>
<keyword id="KW-1185">Reference proteome</keyword>
<keyword id="KW-0687">Ribonucleoprotein</keyword>
<keyword id="KW-0689">Ribosomal protein</keyword>
<proteinExistence type="evidence at protein level"/>
<gene>
    <name type="primary">MRPS23</name>
    <name type="ORF">CGI-138</name>
    <name type="ORF">HSPC329</name>
</gene>
<feature type="initiator methionine" description="Removed" evidence="6">
    <location>
        <position position="1"/>
    </location>
</feature>
<feature type="chain" id="PRO_0000087705" description="Small ribosomal subunit protein mS23">
    <location>
        <begin position="2"/>
        <end position="190"/>
    </location>
</feature>
<feature type="region of interest" description="Disordered" evidence="1">
    <location>
        <begin position="139"/>
        <end position="190"/>
    </location>
</feature>
<feature type="compositionally biased region" description="Basic and acidic residues" evidence="1">
    <location>
        <begin position="166"/>
        <end position="179"/>
    </location>
</feature>
<feature type="modified residue" description="N-acetylalanine" evidence="6">
    <location>
        <position position="2"/>
    </location>
</feature>
<feature type="modified residue" description="N6-acetyllysine" evidence="5">
    <location>
        <position position="102"/>
    </location>
</feature>
<feature type="sequence variant" id="VAR_076269" description="In COXPD46; dbSNP:rs772721937." evidence="3">
    <original>P</original>
    <variation>R</variation>
    <location>
        <position position="40"/>
    </location>
</feature>
<feature type="sequence conflict" description="In Ref. 1; AAD34133." evidence="4" ref="1">
    <original>S</original>
    <variation>C</variation>
    <location>
        <position position="11"/>
    </location>
</feature>
<feature type="strand" evidence="8">
    <location>
        <begin position="7"/>
        <end position="10"/>
    </location>
</feature>
<feature type="helix" evidence="7">
    <location>
        <begin position="12"/>
        <end position="21"/>
    </location>
</feature>
<feature type="strand" evidence="7">
    <location>
        <begin position="24"/>
        <end position="27"/>
    </location>
</feature>
<feature type="helix" evidence="7">
    <location>
        <begin position="32"/>
        <end position="37"/>
    </location>
</feature>
<feature type="helix" evidence="7">
    <location>
        <begin position="66"/>
        <end position="77"/>
    </location>
</feature>
<feature type="helix" evidence="7">
    <location>
        <begin position="95"/>
        <end position="108"/>
    </location>
</feature>
<feature type="helix" evidence="7">
    <location>
        <begin position="114"/>
        <end position="128"/>
    </location>
</feature>
<organism>
    <name type="scientific">Homo sapiens</name>
    <name type="common">Human</name>
    <dbReference type="NCBI Taxonomy" id="9606"/>
    <lineage>
        <taxon>Eukaryota</taxon>
        <taxon>Metazoa</taxon>
        <taxon>Chordata</taxon>
        <taxon>Craniata</taxon>
        <taxon>Vertebrata</taxon>
        <taxon>Euteleostomi</taxon>
        <taxon>Mammalia</taxon>
        <taxon>Eutheria</taxon>
        <taxon>Euarchontoglires</taxon>
        <taxon>Primates</taxon>
        <taxon>Haplorrhini</taxon>
        <taxon>Catarrhini</taxon>
        <taxon>Hominidae</taxon>
        <taxon>Homo</taxon>
    </lineage>
</organism>